<name>B2DXL_ARATH</name>
<accession>Q9LYE7</accession>
<accession>Q570G0</accession>
<accession>Q8H168</accession>
<accession>Q8LCM9</accession>
<keyword id="KW-0134">Cell wall</keyword>
<keyword id="KW-0217">Developmental protein</keyword>
<keyword id="KW-0325">Glycoprotein</keyword>
<keyword id="KW-1185">Reference proteome</keyword>
<keyword id="KW-0964">Secreted</keyword>
<keyword id="KW-0732">Signal</keyword>
<organism>
    <name type="scientific">Arabidopsis thaliana</name>
    <name type="common">Mouse-ear cress</name>
    <dbReference type="NCBI Taxonomy" id="3702"/>
    <lineage>
        <taxon>Eukaryota</taxon>
        <taxon>Viridiplantae</taxon>
        <taxon>Streptophyta</taxon>
        <taxon>Embryophyta</taxon>
        <taxon>Tracheophyta</taxon>
        <taxon>Spermatophyta</taxon>
        <taxon>Magnoliopsida</taxon>
        <taxon>eudicotyledons</taxon>
        <taxon>Gunneridae</taxon>
        <taxon>Pentapetalae</taxon>
        <taxon>rosids</taxon>
        <taxon>malvids</taxon>
        <taxon>Brassicales</taxon>
        <taxon>Brassicaceae</taxon>
        <taxon>Camelineae</taxon>
        <taxon>Arabidopsis</taxon>
    </lineage>
</organism>
<evidence type="ECO:0000250" key="1">
    <source>
        <dbReference type="UniProtKB" id="Q94F20"/>
    </source>
</evidence>
<evidence type="ECO:0000255" key="2"/>
<evidence type="ECO:0000255" key="3">
    <source>
        <dbReference type="PROSITE-ProRule" id="PRU00498"/>
    </source>
</evidence>
<evidence type="ECO:0000269" key="4">
    <source>
    </source>
</evidence>
<evidence type="ECO:0000303" key="5">
    <source>
    </source>
</evidence>
<evidence type="ECO:0000305" key="6"/>
<evidence type="ECO:0000312" key="7">
    <source>
        <dbReference type="Araport" id="AT5G11420"/>
    </source>
</evidence>
<evidence type="ECO:0000312" key="8">
    <source>
        <dbReference type="EMBL" id="CAB87702.1"/>
    </source>
</evidence>
<comment type="function">
    <text evidence="4">Together with BIIDXI, acts as a positive regulator of PME3 activity during several developmental processes, including seed germination and endosperm (testa) rupture at the micropyle, probably by modulating the pectin status in cell walls.</text>
</comment>
<comment type="subunit">
    <text evidence="5">Interacts with PME3.</text>
</comment>
<comment type="subcellular location">
    <subcellularLocation>
        <location evidence="1">Secreted</location>
        <location evidence="1">Cell wall</location>
    </subcellularLocation>
</comment>
<comment type="developmental stage">
    <text evidence="4 5">Present in the vascular tissue of radicles from germinating seeds, 6 hours after imbibition (PubMed:25442819). Accumulates in the micropylar endosperm prior to testa rupture (PubMed:25442819).</text>
</comment>
<comment type="sequence caution" evidence="6">
    <conflict type="erroneous initiation">
        <sequence resource="EMBL-CDS" id="BAD93922"/>
    </conflict>
    <text>Truncated N-terminus.</text>
</comment>
<gene>
    <name evidence="7" type="ordered locus">At5g11420</name>
    <name evidence="8" type="ORF">F15N18.10</name>
</gene>
<feature type="signal peptide" evidence="2">
    <location>
        <begin position="1"/>
        <end position="22"/>
    </location>
</feature>
<feature type="chain" id="PRO_5014313106" description="BIIDXI-like protein At5g11420">
    <location>
        <begin position="23"/>
        <end position="366"/>
    </location>
</feature>
<feature type="glycosylation site" description="N-linked (GlcNAc...) asparagine" evidence="3">
    <location>
        <position position="98"/>
    </location>
</feature>
<feature type="glycosylation site" description="N-linked (GlcNAc...) asparagine" evidence="3">
    <location>
        <position position="122"/>
    </location>
</feature>
<feature type="glycosylation site" description="N-linked (GlcNAc...) asparagine" evidence="3">
    <location>
        <position position="209"/>
    </location>
</feature>
<feature type="sequence conflict" description="In Ref. 4; AAM63507." evidence="6" ref="4">
    <original>N</original>
    <variation>S</variation>
    <location>
        <position position="191"/>
    </location>
</feature>
<feature type="sequence conflict" description="In Ref. 3; AAN31807." evidence="6" ref="3">
    <original>R</original>
    <variation>K</variation>
    <location>
        <position position="270"/>
    </location>
</feature>
<proteinExistence type="evidence at protein level"/>
<protein>
    <recommendedName>
        <fullName>BIIDXI-like protein At5g11420</fullName>
    </recommendedName>
</protein>
<reference key="1">
    <citation type="journal article" date="2000" name="Nature">
        <title>Sequence and analysis of chromosome 5 of the plant Arabidopsis thaliana.</title>
        <authorList>
            <person name="Tabata S."/>
            <person name="Kaneko T."/>
            <person name="Nakamura Y."/>
            <person name="Kotani H."/>
            <person name="Kato T."/>
            <person name="Asamizu E."/>
            <person name="Miyajima N."/>
            <person name="Sasamoto S."/>
            <person name="Kimura T."/>
            <person name="Hosouchi T."/>
            <person name="Kawashima K."/>
            <person name="Kohara M."/>
            <person name="Matsumoto M."/>
            <person name="Matsuno A."/>
            <person name="Muraki A."/>
            <person name="Nakayama S."/>
            <person name="Nakazaki N."/>
            <person name="Naruo K."/>
            <person name="Okumura S."/>
            <person name="Shinpo S."/>
            <person name="Takeuchi C."/>
            <person name="Wada T."/>
            <person name="Watanabe A."/>
            <person name="Yamada M."/>
            <person name="Yasuda M."/>
            <person name="Sato S."/>
            <person name="de la Bastide M."/>
            <person name="Huang E."/>
            <person name="Spiegel L."/>
            <person name="Gnoj L."/>
            <person name="O'Shaughnessy A."/>
            <person name="Preston R."/>
            <person name="Habermann K."/>
            <person name="Murray J."/>
            <person name="Johnson D."/>
            <person name="Rohlfing T."/>
            <person name="Nelson J."/>
            <person name="Stoneking T."/>
            <person name="Pepin K."/>
            <person name="Spieth J."/>
            <person name="Sekhon M."/>
            <person name="Armstrong J."/>
            <person name="Becker M."/>
            <person name="Belter E."/>
            <person name="Cordum H."/>
            <person name="Cordes M."/>
            <person name="Courtney L."/>
            <person name="Courtney W."/>
            <person name="Dante M."/>
            <person name="Du H."/>
            <person name="Edwards J."/>
            <person name="Fryman J."/>
            <person name="Haakensen B."/>
            <person name="Lamar E."/>
            <person name="Latreille P."/>
            <person name="Leonard S."/>
            <person name="Meyer R."/>
            <person name="Mulvaney E."/>
            <person name="Ozersky P."/>
            <person name="Riley A."/>
            <person name="Strowmatt C."/>
            <person name="Wagner-McPherson C."/>
            <person name="Wollam A."/>
            <person name="Yoakum M."/>
            <person name="Bell M."/>
            <person name="Dedhia N."/>
            <person name="Parnell L."/>
            <person name="Shah R."/>
            <person name="Rodriguez M."/>
            <person name="Hoon See L."/>
            <person name="Vil D."/>
            <person name="Baker J."/>
            <person name="Kirchoff K."/>
            <person name="Toth K."/>
            <person name="King L."/>
            <person name="Bahret A."/>
            <person name="Miller B."/>
            <person name="Marra M.A."/>
            <person name="Martienssen R."/>
            <person name="McCombie W.R."/>
            <person name="Wilson R.K."/>
            <person name="Murphy G."/>
            <person name="Bancroft I."/>
            <person name="Volckaert G."/>
            <person name="Wambutt R."/>
            <person name="Duesterhoeft A."/>
            <person name="Stiekema W."/>
            <person name="Pohl T."/>
            <person name="Entian K.-D."/>
            <person name="Terryn N."/>
            <person name="Hartley N."/>
            <person name="Bent E."/>
            <person name="Johnson S."/>
            <person name="Langham S.-A."/>
            <person name="McCullagh B."/>
            <person name="Robben J."/>
            <person name="Grymonprez B."/>
            <person name="Zimmermann W."/>
            <person name="Ramsperger U."/>
            <person name="Wedler H."/>
            <person name="Balke K."/>
            <person name="Wedler E."/>
            <person name="Peters S."/>
            <person name="van Staveren M."/>
            <person name="Dirkse W."/>
            <person name="Mooijman P."/>
            <person name="Klein Lankhorst R."/>
            <person name="Weitzenegger T."/>
            <person name="Bothe G."/>
            <person name="Rose M."/>
            <person name="Hauf J."/>
            <person name="Berneiser S."/>
            <person name="Hempel S."/>
            <person name="Feldpausch M."/>
            <person name="Lamberth S."/>
            <person name="Villarroel R."/>
            <person name="Gielen J."/>
            <person name="Ardiles W."/>
            <person name="Bents O."/>
            <person name="Lemcke K."/>
            <person name="Kolesov G."/>
            <person name="Mayer K.F.X."/>
            <person name="Rudd S."/>
            <person name="Schoof H."/>
            <person name="Schueller C."/>
            <person name="Zaccaria P."/>
            <person name="Mewes H.-W."/>
            <person name="Bevan M."/>
            <person name="Fransz P.F."/>
        </authorList>
    </citation>
    <scope>NUCLEOTIDE SEQUENCE [LARGE SCALE GENOMIC DNA]</scope>
    <source>
        <strain>cv. Columbia</strain>
    </source>
</reference>
<reference key="2">
    <citation type="journal article" date="2017" name="Plant J.">
        <title>Araport11: a complete reannotation of the Arabidopsis thaliana reference genome.</title>
        <authorList>
            <person name="Cheng C.Y."/>
            <person name="Krishnakumar V."/>
            <person name="Chan A.P."/>
            <person name="Thibaud-Nissen F."/>
            <person name="Schobel S."/>
            <person name="Town C.D."/>
        </authorList>
    </citation>
    <scope>GENOME REANNOTATION</scope>
    <source>
        <strain>cv. Columbia</strain>
    </source>
</reference>
<reference key="3">
    <citation type="journal article" date="2003" name="Science">
        <title>Empirical analysis of transcriptional activity in the Arabidopsis genome.</title>
        <authorList>
            <person name="Yamada K."/>
            <person name="Lim J."/>
            <person name="Dale J.M."/>
            <person name="Chen H."/>
            <person name="Shinn P."/>
            <person name="Palm C.J."/>
            <person name="Southwick A.M."/>
            <person name="Wu H.C."/>
            <person name="Kim C.J."/>
            <person name="Nguyen M."/>
            <person name="Pham P.K."/>
            <person name="Cheuk R.F."/>
            <person name="Karlin-Newmann G."/>
            <person name="Liu S.X."/>
            <person name="Lam B."/>
            <person name="Sakano H."/>
            <person name="Wu T."/>
            <person name="Yu G."/>
            <person name="Miranda M."/>
            <person name="Quach H.L."/>
            <person name="Tripp M."/>
            <person name="Chang C.H."/>
            <person name="Lee J.M."/>
            <person name="Toriumi M.J."/>
            <person name="Chan M.M."/>
            <person name="Tang C.C."/>
            <person name="Onodera C.S."/>
            <person name="Deng J.M."/>
            <person name="Akiyama K."/>
            <person name="Ansari Y."/>
            <person name="Arakawa T."/>
            <person name="Banh J."/>
            <person name="Banno F."/>
            <person name="Bowser L."/>
            <person name="Brooks S.Y."/>
            <person name="Carninci P."/>
            <person name="Chao Q."/>
            <person name="Choy N."/>
            <person name="Enju A."/>
            <person name="Goldsmith A.D."/>
            <person name="Gurjal M."/>
            <person name="Hansen N.F."/>
            <person name="Hayashizaki Y."/>
            <person name="Johnson-Hopson C."/>
            <person name="Hsuan V.W."/>
            <person name="Iida K."/>
            <person name="Karnes M."/>
            <person name="Khan S."/>
            <person name="Koesema E."/>
            <person name="Ishida J."/>
            <person name="Jiang P.X."/>
            <person name="Jones T."/>
            <person name="Kawai J."/>
            <person name="Kamiya A."/>
            <person name="Meyers C."/>
            <person name="Nakajima M."/>
            <person name="Narusaka M."/>
            <person name="Seki M."/>
            <person name="Sakurai T."/>
            <person name="Satou M."/>
            <person name="Tamse R."/>
            <person name="Vaysberg M."/>
            <person name="Wallender E.K."/>
            <person name="Wong C."/>
            <person name="Yamamura Y."/>
            <person name="Yuan S."/>
            <person name="Shinozaki K."/>
            <person name="Davis R.W."/>
            <person name="Theologis A."/>
            <person name="Ecker J.R."/>
        </authorList>
    </citation>
    <scope>NUCLEOTIDE SEQUENCE [LARGE SCALE MRNA]</scope>
    <source>
        <strain>cv. Columbia</strain>
    </source>
</reference>
<reference key="4">
    <citation type="submission" date="2002-03" db="EMBL/GenBank/DDBJ databases">
        <title>Full-length cDNA from Arabidopsis thaliana.</title>
        <authorList>
            <person name="Brover V.V."/>
            <person name="Troukhan M.E."/>
            <person name="Alexandrov N.A."/>
            <person name="Lu Y.-P."/>
            <person name="Flavell R.B."/>
            <person name="Feldmann K.A."/>
        </authorList>
    </citation>
    <scope>NUCLEOTIDE SEQUENCE [LARGE SCALE MRNA]</scope>
</reference>
<reference key="5">
    <citation type="submission" date="2005-03" db="EMBL/GenBank/DDBJ databases">
        <title>Large-scale analysis of RIKEN Arabidopsis full-length (RAFL) cDNAs.</title>
        <authorList>
            <person name="Totoki Y."/>
            <person name="Seki M."/>
            <person name="Ishida J."/>
            <person name="Nakajima M."/>
            <person name="Enju A."/>
            <person name="Kamiya A."/>
            <person name="Narusaka M."/>
            <person name="Shin-i T."/>
            <person name="Nakagawa M."/>
            <person name="Sakamoto N."/>
            <person name="Oishi K."/>
            <person name="Kohara Y."/>
            <person name="Kobayashi M."/>
            <person name="Toyoda A."/>
            <person name="Sakaki Y."/>
            <person name="Sakurai T."/>
            <person name="Iida K."/>
            <person name="Akiyama K."/>
            <person name="Satou M."/>
            <person name="Toyoda T."/>
            <person name="Konagaya A."/>
            <person name="Carninci P."/>
            <person name="Kawai J."/>
            <person name="Hayashizaki Y."/>
            <person name="Shinozaki K."/>
        </authorList>
    </citation>
    <scope>NUCLEOTIDE SEQUENCE [LARGE SCALE MRNA] OF 284-366</scope>
    <source>
        <strain>cv. Columbia</strain>
    </source>
</reference>
<reference key="6">
    <citation type="journal article" date="2007" name="Mol. Cell. Proteomics">
        <title>Multidimensional protein identification technology (MudPIT) analysis of ubiquitinated proteins in plants.</title>
        <authorList>
            <person name="Maor R."/>
            <person name="Jones A."/>
            <person name="Nuehse T.S."/>
            <person name="Studholme D.J."/>
            <person name="Peck S.C."/>
            <person name="Shirasu K."/>
        </authorList>
    </citation>
    <scope>IDENTIFICATION BY MASS SPECTROMETRY [LARGE SCALE ANALYSIS]</scope>
</reference>
<reference key="7">
    <citation type="journal article" date="2012" name="Mol. Phylogenet. Evol.">
        <title>The highly conserved spermatophyte cell wall DUF642 protein family: phylogeny and first evidence of interaction with cell wall polysaccharides in vitro.</title>
        <authorList>
            <person name="Vazquez-Lobo A."/>
            <person name="Roujol D."/>
            <person name="Zuniga-Sanchez E."/>
            <person name="Albenne C."/>
            <person name="Pinero D."/>
            <person name="Gamboa de Buen A."/>
            <person name="Jamet E."/>
        </authorList>
    </citation>
    <scope>GENE FAMILY</scope>
</reference>
<reference key="8">
    <citation type="journal article" date="2014" name="BMC Plant Biol.">
        <title>BIIDXI, the At4g32460 DUF642 gene, is involved in pectin methyl esterase regulation during Arabidopsis thaliana seed germination and plant development.</title>
        <authorList>
            <person name="Zuniga-Sanchez E."/>
            <person name="Soriano D."/>
            <person name="Martinez-Barajas E."/>
            <person name="Orozco-Segovia A."/>
            <person name="Gamboa-deBuen A."/>
        </authorList>
    </citation>
    <scope>FUNCTION</scope>
    <scope>INTERACTION WITH PME3</scope>
    <scope>DEVELOPMENTAL STAGE</scope>
    <source>
        <strain>cv. Columbia</strain>
    </source>
</reference>
<reference key="9">
    <citation type="journal article" date="2019" name="Int. J. Mol. Sci.">
        <title>Overview of the role of cell wall DUF642 proteins in plant development.</title>
        <authorList>
            <person name="Cruz-Valderrama J.E."/>
            <person name="Gomez-Maqueo X."/>
            <person name="Salazar-Iribe A."/>
            <person name="Zuniga-Sanchez E."/>
            <person name="Hernandez-Barrera A."/>
            <person name="Quezada-Rodriguez E."/>
            <person name="Gamboa-deBuen A."/>
        </authorList>
    </citation>
    <scope>REVIEW ON DUF642 PROTEINS</scope>
</reference>
<dbReference type="EMBL" id="AL163815">
    <property type="protein sequence ID" value="CAB87702.1"/>
    <property type="molecule type" value="Genomic_DNA"/>
</dbReference>
<dbReference type="EMBL" id="CP002688">
    <property type="protein sequence ID" value="AED91677.1"/>
    <property type="molecule type" value="Genomic_DNA"/>
</dbReference>
<dbReference type="EMBL" id="AY046047">
    <property type="protein sequence ID" value="AAK76721.1"/>
    <property type="molecule type" value="mRNA"/>
</dbReference>
<dbReference type="EMBL" id="AY096359">
    <property type="protein sequence ID" value="AAM20000.1"/>
    <property type="molecule type" value="mRNA"/>
</dbReference>
<dbReference type="EMBL" id="BT000660">
    <property type="protein sequence ID" value="AAN31807.1"/>
    <property type="molecule type" value="mRNA"/>
</dbReference>
<dbReference type="EMBL" id="AY086506">
    <property type="protein sequence ID" value="AAM63507.1"/>
    <property type="molecule type" value="mRNA"/>
</dbReference>
<dbReference type="EMBL" id="AK220748">
    <property type="protein sequence ID" value="BAD93922.1"/>
    <property type="status" value="ALT_INIT"/>
    <property type="molecule type" value="mRNA"/>
</dbReference>
<dbReference type="PIR" id="T48501">
    <property type="entry name" value="T48501"/>
</dbReference>
<dbReference type="RefSeq" id="NP_196703.1">
    <property type="nucleotide sequence ID" value="NM_121180.4"/>
</dbReference>
<dbReference type="SMR" id="Q9LYE7"/>
<dbReference type="FunCoup" id="Q9LYE7">
    <property type="interactions" value="487"/>
</dbReference>
<dbReference type="STRING" id="3702.Q9LYE7"/>
<dbReference type="GlyGen" id="Q9LYE7">
    <property type="glycosylation" value="3 sites"/>
</dbReference>
<dbReference type="PaxDb" id="3702-AT5G11420.1"/>
<dbReference type="ProteomicsDB" id="187805"/>
<dbReference type="EnsemblPlants" id="AT5G11420.1">
    <property type="protein sequence ID" value="AT5G11420.1"/>
    <property type="gene ID" value="AT5G11420"/>
</dbReference>
<dbReference type="GeneID" id="831013"/>
<dbReference type="Gramene" id="AT5G11420.1">
    <property type="protein sequence ID" value="AT5G11420.1"/>
    <property type="gene ID" value="AT5G11420"/>
</dbReference>
<dbReference type="KEGG" id="ath:AT5G11420"/>
<dbReference type="Araport" id="AT5G11420"/>
<dbReference type="TAIR" id="AT5G11420"/>
<dbReference type="eggNOG" id="ENOG502QRP6">
    <property type="taxonomic scope" value="Eukaryota"/>
</dbReference>
<dbReference type="HOGENOM" id="CLU_040251_0_0_1"/>
<dbReference type="OMA" id="TVVIGHN"/>
<dbReference type="CD-CODE" id="4299E36E">
    <property type="entry name" value="Nucleolus"/>
</dbReference>
<dbReference type="PRO" id="PR:Q9LYE7"/>
<dbReference type="Proteomes" id="UP000006548">
    <property type="component" value="Chromosome 5"/>
</dbReference>
<dbReference type="ExpressionAtlas" id="Q9LYE7">
    <property type="expression patterns" value="baseline and differential"/>
</dbReference>
<dbReference type="GO" id="GO:0005576">
    <property type="term" value="C:extracellular region"/>
    <property type="evidence" value="ECO:0007669"/>
    <property type="project" value="UniProtKB-KW"/>
</dbReference>
<dbReference type="GO" id="GO:0005886">
    <property type="term" value="C:plasma membrane"/>
    <property type="evidence" value="ECO:0007005"/>
    <property type="project" value="TAIR"/>
</dbReference>
<dbReference type="GO" id="GO:0010030">
    <property type="term" value="P:positive regulation of seed germination"/>
    <property type="evidence" value="ECO:0000315"/>
    <property type="project" value="UniProtKB"/>
</dbReference>
<dbReference type="GO" id="GO:1902066">
    <property type="term" value="P:regulation of cell wall pectin metabolic process"/>
    <property type="evidence" value="ECO:0000315"/>
    <property type="project" value="UniProtKB"/>
</dbReference>
<dbReference type="FunFam" id="2.60.120.260:FF:000031">
    <property type="entry name" value="DUF642 family protein"/>
    <property type="match status" value="1"/>
</dbReference>
<dbReference type="Gene3D" id="2.60.120.260">
    <property type="entry name" value="Galactose-binding domain-like"/>
    <property type="match status" value="2"/>
</dbReference>
<dbReference type="InterPro" id="IPR006946">
    <property type="entry name" value="DGR2-like_dom"/>
</dbReference>
<dbReference type="InterPro" id="IPR008979">
    <property type="entry name" value="Galactose-bd-like_sf"/>
</dbReference>
<dbReference type="InterPro" id="IPR052437">
    <property type="entry name" value="Pectin_Meth_Modulator"/>
</dbReference>
<dbReference type="PANTHER" id="PTHR31265:SF3">
    <property type="entry name" value="OS02G0205200 PROTEIN"/>
    <property type="match status" value="1"/>
</dbReference>
<dbReference type="PANTHER" id="PTHR31265">
    <property type="entry name" value="OS02G0527500 PROTEIN-RELATED"/>
    <property type="match status" value="1"/>
</dbReference>
<dbReference type="Pfam" id="PF04862">
    <property type="entry name" value="DUF642"/>
    <property type="match status" value="2"/>
</dbReference>
<dbReference type="SUPFAM" id="SSF49785">
    <property type="entry name" value="Galactose-binding domain-like"/>
    <property type="match status" value="1"/>
</dbReference>
<sequence>MKGGSLSFLFVLLIATITSVICFSDGMLPNGDFELGPKPSDMKGTQVINKKAIPSWELSGFVEYIKSGQKQGDMLLVVPAGKFAIRLGNEASIKQRLNVTKGMYYSLTFSAARTCAQDERLNISVAPDSGVIPIQTVYSSSGWDLYAWAFQAESNVAEIVIHNPGEEEDPACGPLIDGVAIKALYPPRPTNKNILKNGGFEEGPYVLPNATTGVLVPPFIEDDHSPLPAWMVESLKAIKYVDVEHFSVPQGRRAVELVAGKESAIAQVARTVVGKTYVLSFAVGDANNACQGSMVVEAFAGKDTLKVPYESRGKGGFKRASLRFVAVSTRTRVMFYSTFYSMRSDDFSSLCGPVIDDVKLLSARKP</sequence>